<name>ORTB_UNKP</name>
<organism>
    <name type="scientific">Unknown prokaryotic organism</name>
    <dbReference type="NCBI Taxonomy" id="2725"/>
    <lineage>
        <taxon>Bacteria</taxon>
        <taxon>environmental samples</taxon>
    </lineage>
</organism>
<reference key="1">
    <citation type="submission" date="2008-04" db="EMBL/GenBank/DDBJ databases">
        <authorList>
            <consortium name="Genoscope - CEA"/>
        </authorList>
    </citation>
    <scope>NUCLEOTIDE SEQUENCE [GENOMIC DNA]</scope>
</reference>
<reference key="2">
    <citation type="journal article" date="2009" name="J. Bacteriol.">
        <title>A conserved gene cluster rules anaerobic oxidative degradation of L-ornithine.</title>
        <authorList>
            <person name="Fonknechten N."/>
            <person name="Perret A."/>
            <person name="Perchat N."/>
            <person name="Tricot S."/>
            <person name="Lechaplais C."/>
            <person name="Vallenet D."/>
            <person name="Vergne C."/>
            <person name="Zaparucha A."/>
            <person name="Le Paslier D."/>
            <person name="Weissenbach J."/>
            <person name="Salanoubat M."/>
        </authorList>
    </citation>
    <scope>NUCLEOTIDE SEQUENCE [GENOMIC DNA]</scope>
    <scope>FUNCTION</scope>
    <scope>CATALYTIC ACTIVITY</scope>
    <scope>BIOPHYSICOCHEMICAL PROPERTIES</scope>
    <scope>COFACTOR</scope>
    <scope>SUBSTRATE SPECIFICITY</scope>
    <scope>SUBUNIT</scope>
</reference>
<evidence type="ECO:0000250" key="1">
    <source>
        <dbReference type="UniProtKB" id="P9WG59"/>
    </source>
</evidence>
<evidence type="ECO:0000269" key="2">
    <source>
    </source>
</evidence>
<evidence type="ECO:0000303" key="3">
    <source>
    </source>
</evidence>
<evidence type="ECO:0000305" key="4"/>
<evidence type="ECO:0000305" key="5">
    <source>
    </source>
</evidence>
<evidence type="ECO:0000312" key="6">
    <source>
        <dbReference type="EMBL" id="CAQ42980.1"/>
    </source>
</evidence>
<gene>
    <name evidence="3" type="primary">ortB</name>
    <name evidence="6" type="ORF">DIG-28672_35</name>
</gene>
<accession>C1FW07</accession>
<keyword id="KW-0663">Pyridoxal phosphate</keyword>
<keyword id="KW-0808">Transferase</keyword>
<comment type="function">
    <text evidence="2">Involved in the ornithine fermentation pathway. Catalyzes the thiolytic cleavage of 2-amino-4-ketopentanoate (AKP) with coenzyme A (CoA) to form acetyl-CoA and alanine. It is strictly specific for AKP.</text>
</comment>
<comment type="catalytic activity">
    <reaction evidence="5">
        <text>D-alanine + acetyl-CoA = (2R)-2-amino-4-oxopentanoate + CoA</text>
        <dbReference type="Rhea" id="RHEA:51436"/>
        <dbReference type="ChEBI" id="CHEBI:57287"/>
        <dbReference type="ChEBI" id="CHEBI:57288"/>
        <dbReference type="ChEBI" id="CHEBI:57416"/>
        <dbReference type="ChEBI" id="CHEBI:134102"/>
        <dbReference type="EC" id="2.3.1.263"/>
    </reaction>
</comment>
<comment type="cofactor">
    <cofactor evidence="5">
        <name>pyridoxal 5'-phosphate</name>
        <dbReference type="ChEBI" id="CHEBI:597326"/>
    </cofactor>
</comment>
<comment type="biophysicochemical properties">
    <kinetics>
        <KM evidence="2">18 uM for CoA</KM>
        <KM evidence="2">35 uM for AKP</KM>
        <text evidence="2">kcat is 3.5 sec(-1) for CoA as substrate. kcat is 3.4 sec(-1) for AKP as substrate.</text>
    </kinetics>
</comment>
<comment type="subunit">
    <text evidence="2">Heterodimer with OrtA.</text>
</comment>
<comment type="similarity">
    <text evidence="4">Belongs to the threonine synthase family.</text>
</comment>
<sequence>MAKDTSYDAVMDRRAEIMSRALGLNYDEFIISDIAFDYEGMMAKAGYSLEEVRQIQSESGVGNTPLLELRNITDLARKTSKRGFGARILIKDEAANPSGSFKDRRASVSIHHAKKLGYPGVLAATSGNYGAAVASQAAMKNLGCIIVQEVFDSRHVGQPEIIEKSRKCEAYGAEVVQLTVGPELFYVSLILLEETGYFNASLYSPFGISGVETLGYELVEQIRARYDKDPAYIVVTHAGGGNVTGTARGALKAGAKNSTIIGASVDLSGLHMASDNDFNKKSFTTGHTGFGVPFATWPDRTDVPKNAARPLRYLDRYVTVTQGEVFYVTEALAQVEGMERGPAGNTSLAAAIALARELPEDEIVVVQETEYTGAGKHPWAQLDFAKQNGIAVKRGAPKENKPGKTIVIPQNFSQITATEMDLNRMRRSYIRNALERNKVKNVTEEDIRFLAEDTKTDADFVTSVIRDLGVRL</sequence>
<dbReference type="EC" id="2.3.1.263" evidence="5"/>
<dbReference type="EMBL" id="CU695248">
    <property type="protein sequence ID" value="CAQ42980.1"/>
    <property type="molecule type" value="Genomic_DNA"/>
</dbReference>
<dbReference type="SMR" id="C1FW07"/>
<dbReference type="KEGG" id="ag:CAQ42980"/>
<dbReference type="BioCyc" id="MetaCyc:MONOMER-15135"/>
<dbReference type="BRENDA" id="2.3.1.263">
    <property type="organism ID" value="1522"/>
</dbReference>
<dbReference type="GO" id="GO:0003985">
    <property type="term" value="F:acetyl-CoA C-acetyltransferase activity"/>
    <property type="evidence" value="ECO:0000303"/>
    <property type="project" value="UniProtKB"/>
</dbReference>
<dbReference type="GO" id="GO:0006591">
    <property type="term" value="P:ornithine metabolic process"/>
    <property type="evidence" value="ECO:0000304"/>
    <property type="project" value="UniProtKB"/>
</dbReference>
<dbReference type="CDD" id="cd00640">
    <property type="entry name" value="Trp-synth-beta_II"/>
    <property type="match status" value="1"/>
</dbReference>
<dbReference type="Gene3D" id="3.40.50.1100">
    <property type="match status" value="2"/>
</dbReference>
<dbReference type="InterPro" id="IPR053471">
    <property type="entry name" value="AKP_thiolase_beta"/>
</dbReference>
<dbReference type="InterPro" id="IPR050214">
    <property type="entry name" value="Cys_Synth/Cystath_Beta-Synth"/>
</dbReference>
<dbReference type="InterPro" id="IPR001926">
    <property type="entry name" value="TrpB-like_PALP"/>
</dbReference>
<dbReference type="InterPro" id="IPR036052">
    <property type="entry name" value="TrpB-like_PALP_sf"/>
</dbReference>
<dbReference type="NCBIfam" id="NF040741">
    <property type="entry name" value="ornith_OrtB"/>
    <property type="match status" value="1"/>
</dbReference>
<dbReference type="PANTHER" id="PTHR10314">
    <property type="entry name" value="CYSTATHIONINE BETA-SYNTHASE"/>
    <property type="match status" value="1"/>
</dbReference>
<dbReference type="Pfam" id="PF00291">
    <property type="entry name" value="PALP"/>
    <property type="match status" value="1"/>
</dbReference>
<dbReference type="SUPFAM" id="SSF53686">
    <property type="entry name" value="Tryptophan synthase beta subunit-like PLP-dependent enzymes"/>
    <property type="match status" value="1"/>
</dbReference>
<proteinExistence type="evidence at protein level"/>
<feature type="chain" id="PRO_0000438120" description="2-amino-4-ketopentanoate thiolase beta subunit">
    <location>
        <begin position="1"/>
        <end position="472"/>
    </location>
</feature>
<feature type="binding site" evidence="1">
    <location>
        <position position="128"/>
    </location>
    <ligand>
        <name>pyridoxal 5'-phosphate</name>
        <dbReference type="ChEBI" id="CHEBI:597326"/>
    </ligand>
</feature>
<feature type="binding site" evidence="1">
    <location>
        <begin position="238"/>
        <end position="242"/>
    </location>
    <ligand>
        <name>pyridoxal 5'-phosphate</name>
        <dbReference type="ChEBI" id="CHEBI:597326"/>
    </ligand>
</feature>
<feature type="modified residue" description="N6-(pyridoxal phosphate)lysine" evidence="1">
    <location>
        <position position="102"/>
    </location>
</feature>
<protein>
    <recommendedName>
        <fullName evidence="3">2-amino-4-ketopentanoate thiolase beta subunit</fullName>
        <ecNumber evidence="5">2.3.1.263</ecNumber>
    </recommendedName>
    <alternativeName>
        <fullName evidence="3">AKP thiolase</fullName>
        <shortName evidence="3">AKPT</shortName>
    </alternativeName>
</protein>